<feature type="transit peptide" description="Chloroplast" evidence="3">
    <location>
        <begin position="1"/>
        <end position="49"/>
    </location>
</feature>
<feature type="chain" id="PRO_0000280533" description="Chloroplastic group IIB intron splicing facilitator CRS2, chloroplastic">
    <location>
        <begin position="50"/>
        <end position="259"/>
    </location>
</feature>
<feature type="region of interest" description="Disordered" evidence="4">
    <location>
        <begin position="1"/>
        <end position="21"/>
    </location>
</feature>
<feature type="active site" description="Proton acceptor" evidence="2">
    <location>
        <position position="82"/>
    </location>
</feature>
<feature type="binding site" evidence="2">
    <location>
        <position position="77"/>
    </location>
    <ligand>
        <name>tRNA</name>
        <dbReference type="ChEBI" id="CHEBI:17843"/>
    </ligand>
</feature>
<feature type="binding site" evidence="2">
    <location>
        <position position="127"/>
    </location>
    <ligand>
        <name>tRNA</name>
        <dbReference type="ChEBI" id="CHEBI:17843"/>
    </ligand>
</feature>
<feature type="binding site" evidence="2">
    <location>
        <position position="129"/>
    </location>
    <ligand>
        <name>tRNA</name>
        <dbReference type="ChEBI" id="CHEBI:17843"/>
    </ligand>
</feature>
<feature type="binding site" evidence="2">
    <location>
        <position position="175"/>
    </location>
    <ligand>
        <name>tRNA</name>
        <dbReference type="ChEBI" id="CHEBI:17843"/>
    </ligand>
</feature>
<feature type="site" description="Stabilizes the basic form of H active site to accept a proton" evidence="2">
    <location>
        <position position="154"/>
    </location>
</feature>
<reference key="1">
    <citation type="journal article" date="2002" name="Nature">
        <title>The genome sequence and structure of rice chromosome 1.</title>
        <authorList>
            <person name="Sasaki T."/>
            <person name="Matsumoto T."/>
            <person name="Yamamoto K."/>
            <person name="Sakata K."/>
            <person name="Baba T."/>
            <person name="Katayose Y."/>
            <person name="Wu J."/>
            <person name="Niimura Y."/>
            <person name="Cheng Z."/>
            <person name="Nagamura Y."/>
            <person name="Antonio B.A."/>
            <person name="Kanamori H."/>
            <person name="Hosokawa S."/>
            <person name="Masukawa M."/>
            <person name="Arikawa K."/>
            <person name="Chiden Y."/>
            <person name="Hayashi M."/>
            <person name="Okamoto M."/>
            <person name="Ando T."/>
            <person name="Aoki H."/>
            <person name="Arita K."/>
            <person name="Hamada M."/>
            <person name="Harada C."/>
            <person name="Hijishita S."/>
            <person name="Honda M."/>
            <person name="Ichikawa Y."/>
            <person name="Idonuma A."/>
            <person name="Iijima M."/>
            <person name="Ikeda M."/>
            <person name="Ikeno M."/>
            <person name="Ito S."/>
            <person name="Ito T."/>
            <person name="Ito Y."/>
            <person name="Ito Y."/>
            <person name="Iwabuchi A."/>
            <person name="Kamiya K."/>
            <person name="Karasawa W."/>
            <person name="Katagiri S."/>
            <person name="Kikuta A."/>
            <person name="Kobayashi N."/>
            <person name="Kono I."/>
            <person name="Machita K."/>
            <person name="Maehara T."/>
            <person name="Mizuno H."/>
            <person name="Mizubayashi T."/>
            <person name="Mukai Y."/>
            <person name="Nagasaki H."/>
            <person name="Nakashima M."/>
            <person name="Nakama Y."/>
            <person name="Nakamichi Y."/>
            <person name="Nakamura M."/>
            <person name="Namiki N."/>
            <person name="Negishi M."/>
            <person name="Ohta I."/>
            <person name="Ono N."/>
            <person name="Saji S."/>
            <person name="Sakai K."/>
            <person name="Shibata M."/>
            <person name="Shimokawa T."/>
            <person name="Shomura A."/>
            <person name="Song J."/>
            <person name="Takazaki Y."/>
            <person name="Terasawa K."/>
            <person name="Tsuji K."/>
            <person name="Waki K."/>
            <person name="Yamagata H."/>
            <person name="Yamane H."/>
            <person name="Yoshiki S."/>
            <person name="Yoshihara R."/>
            <person name="Yukawa K."/>
            <person name="Zhong H."/>
            <person name="Iwama H."/>
            <person name="Endo T."/>
            <person name="Ito H."/>
            <person name="Hahn J.H."/>
            <person name="Kim H.-I."/>
            <person name="Eun M.-Y."/>
            <person name="Yano M."/>
            <person name="Jiang J."/>
            <person name="Gojobori T."/>
        </authorList>
    </citation>
    <scope>NUCLEOTIDE SEQUENCE [LARGE SCALE GENOMIC DNA]</scope>
    <source>
        <strain>cv. Nipponbare</strain>
    </source>
</reference>
<reference key="2">
    <citation type="journal article" date="2005" name="Nature">
        <title>The map-based sequence of the rice genome.</title>
        <authorList>
            <consortium name="International rice genome sequencing project (IRGSP)"/>
        </authorList>
    </citation>
    <scope>NUCLEOTIDE SEQUENCE [LARGE SCALE GENOMIC DNA]</scope>
    <source>
        <strain>cv. Nipponbare</strain>
    </source>
</reference>
<reference key="3">
    <citation type="journal article" date="2008" name="Nucleic Acids Res.">
        <title>The rice annotation project database (RAP-DB): 2008 update.</title>
        <authorList>
            <consortium name="The rice annotation project (RAP)"/>
        </authorList>
    </citation>
    <scope>GENOME REANNOTATION</scope>
    <source>
        <strain>cv. Nipponbare</strain>
    </source>
</reference>
<reference key="4">
    <citation type="journal article" date="2013" name="Rice">
        <title>Improvement of the Oryza sativa Nipponbare reference genome using next generation sequence and optical map data.</title>
        <authorList>
            <person name="Kawahara Y."/>
            <person name="de la Bastide M."/>
            <person name="Hamilton J.P."/>
            <person name="Kanamori H."/>
            <person name="McCombie W.R."/>
            <person name="Ouyang S."/>
            <person name="Schwartz D.C."/>
            <person name="Tanaka T."/>
            <person name="Wu J."/>
            <person name="Zhou S."/>
            <person name="Childs K.L."/>
            <person name="Davidson R.M."/>
            <person name="Lin H."/>
            <person name="Quesada-Ocampo L."/>
            <person name="Vaillancourt B."/>
            <person name="Sakai H."/>
            <person name="Lee S.S."/>
            <person name="Kim J."/>
            <person name="Numa H."/>
            <person name="Itoh T."/>
            <person name="Buell C.R."/>
            <person name="Matsumoto T."/>
        </authorList>
    </citation>
    <scope>GENOME REANNOTATION</scope>
    <source>
        <strain>cv. Nipponbare</strain>
    </source>
</reference>
<reference key="5">
    <citation type="journal article" date="2005" name="PLoS Biol.">
        <title>The genomes of Oryza sativa: a history of duplications.</title>
        <authorList>
            <person name="Yu J."/>
            <person name="Wang J."/>
            <person name="Lin W."/>
            <person name="Li S."/>
            <person name="Li H."/>
            <person name="Zhou J."/>
            <person name="Ni P."/>
            <person name="Dong W."/>
            <person name="Hu S."/>
            <person name="Zeng C."/>
            <person name="Zhang J."/>
            <person name="Zhang Y."/>
            <person name="Li R."/>
            <person name="Xu Z."/>
            <person name="Li S."/>
            <person name="Li X."/>
            <person name="Zheng H."/>
            <person name="Cong L."/>
            <person name="Lin L."/>
            <person name="Yin J."/>
            <person name="Geng J."/>
            <person name="Li G."/>
            <person name="Shi J."/>
            <person name="Liu J."/>
            <person name="Lv H."/>
            <person name="Li J."/>
            <person name="Wang J."/>
            <person name="Deng Y."/>
            <person name="Ran L."/>
            <person name="Shi X."/>
            <person name="Wang X."/>
            <person name="Wu Q."/>
            <person name="Li C."/>
            <person name="Ren X."/>
            <person name="Wang J."/>
            <person name="Wang X."/>
            <person name="Li D."/>
            <person name="Liu D."/>
            <person name="Zhang X."/>
            <person name="Ji Z."/>
            <person name="Zhao W."/>
            <person name="Sun Y."/>
            <person name="Zhang Z."/>
            <person name="Bao J."/>
            <person name="Han Y."/>
            <person name="Dong L."/>
            <person name="Ji J."/>
            <person name="Chen P."/>
            <person name="Wu S."/>
            <person name="Liu J."/>
            <person name="Xiao Y."/>
            <person name="Bu D."/>
            <person name="Tan J."/>
            <person name="Yang L."/>
            <person name="Ye C."/>
            <person name="Zhang J."/>
            <person name="Xu J."/>
            <person name="Zhou Y."/>
            <person name="Yu Y."/>
            <person name="Zhang B."/>
            <person name="Zhuang S."/>
            <person name="Wei H."/>
            <person name="Liu B."/>
            <person name="Lei M."/>
            <person name="Yu H."/>
            <person name="Li Y."/>
            <person name="Xu H."/>
            <person name="Wei S."/>
            <person name="He X."/>
            <person name="Fang L."/>
            <person name="Zhang Z."/>
            <person name="Zhang Y."/>
            <person name="Huang X."/>
            <person name="Su Z."/>
            <person name="Tong W."/>
            <person name="Li J."/>
            <person name="Tong Z."/>
            <person name="Li S."/>
            <person name="Ye J."/>
            <person name="Wang L."/>
            <person name="Fang L."/>
            <person name="Lei T."/>
            <person name="Chen C.-S."/>
            <person name="Chen H.-C."/>
            <person name="Xu Z."/>
            <person name="Li H."/>
            <person name="Huang H."/>
            <person name="Zhang F."/>
            <person name="Xu H."/>
            <person name="Li N."/>
            <person name="Zhao C."/>
            <person name="Li S."/>
            <person name="Dong L."/>
            <person name="Huang Y."/>
            <person name="Li L."/>
            <person name="Xi Y."/>
            <person name="Qi Q."/>
            <person name="Li W."/>
            <person name="Zhang B."/>
            <person name="Hu W."/>
            <person name="Zhang Y."/>
            <person name="Tian X."/>
            <person name="Jiao Y."/>
            <person name="Liang X."/>
            <person name="Jin J."/>
            <person name="Gao L."/>
            <person name="Zheng W."/>
            <person name="Hao B."/>
            <person name="Liu S.-M."/>
            <person name="Wang W."/>
            <person name="Yuan L."/>
            <person name="Cao M."/>
            <person name="McDermott J."/>
            <person name="Samudrala R."/>
            <person name="Wang J."/>
            <person name="Wong G.K.-S."/>
            <person name="Yang H."/>
        </authorList>
    </citation>
    <scope>NUCLEOTIDE SEQUENCE [LARGE SCALE GENOMIC DNA]</scope>
    <source>
        <strain>cv. Nipponbare</strain>
    </source>
</reference>
<reference key="6">
    <citation type="journal article" date="2003" name="Science">
        <title>Collection, mapping, and annotation of over 28,000 cDNA clones from japonica rice.</title>
        <authorList>
            <consortium name="The rice full-length cDNA consortium"/>
        </authorList>
    </citation>
    <scope>NUCLEOTIDE SEQUENCE [LARGE SCALE MRNA]</scope>
    <source>
        <strain>cv. Nipponbare</strain>
    </source>
</reference>
<proteinExistence type="evidence at transcript level"/>
<sequence>MSLAVATPASARLSPLTTSSPEPCRRRRLLLSAAAPLRRTRLRRRIAVVASVPDPAARPAEYTPWLIAGLGNPGSKYHGTRHNVGFEMVDRIARDEGITMNTIQSKSLLGIGSIGEVPVLLVKPQSYINYSGEAIGPLAAYYQVPLRHILVMYDEMSLPNGVLRLQRKGGHGRHNGLQNVMECLDSSRELPRLSIGIGSPPGKMDTRAFLLQKFSSEERLQIDTALEQGVDAVRTLVLKGFSGSIERFNLVQKYKFHSV</sequence>
<evidence type="ECO:0000250" key="1"/>
<evidence type="ECO:0000250" key="2">
    <source>
        <dbReference type="UniProtKB" id="P0A7D1"/>
    </source>
</evidence>
<evidence type="ECO:0000255" key="3"/>
<evidence type="ECO:0000256" key="4">
    <source>
        <dbReference type="SAM" id="MobiDB-lite"/>
    </source>
</evidence>
<evidence type="ECO:0000305" key="5"/>
<evidence type="ECO:0000312" key="6">
    <source>
        <dbReference type="EMBL" id="EEE53814.1"/>
    </source>
</evidence>
<name>CRS2_ORYSJ</name>
<keyword id="KW-0150">Chloroplast</keyword>
<keyword id="KW-0507">mRNA processing</keyword>
<keyword id="KW-0508">mRNA splicing</keyword>
<keyword id="KW-0934">Plastid</keyword>
<keyword id="KW-1185">Reference proteome</keyword>
<keyword id="KW-0687">Ribonucleoprotein</keyword>
<keyword id="KW-0694">RNA-binding</keyword>
<keyword id="KW-0809">Transit peptide</keyword>
<keyword id="KW-0820">tRNA-binding</keyword>
<comment type="function">
    <text evidence="1">Required for the splicing of group IIB introns in chloroplasts.</text>
</comment>
<comment type="subunit">
    <text evidence="1">Part of large ribonucleo-protein complexes that include group IIB introns and either CAF1 or CAF2.</text>
</comment>
<comment type="subcellular location">
    <subcellularLocation>
        <location evidence="1">Plastid</location>
        <location evidence="1">Chloroplast stroma</location>
    </subcellularLocation>
</comment>
<comment type="similarity">
    <text evidence="5">Belongs to the PTH family. CRS2 subfamily.</text>
</comment>
<dbReference type="EMBL" id="AP003214">
    <property type="protein sequence ID" value="BAD52792.1"/>
    <property type="molecule type" value="Genomic_DNA"/>
</dbReference>
<dbReference type="EMBL" id="AP008207">
    <property type="protein sequence ID" value="BAF03849.1"/>
    <property type="molecule type" value="Genomic_DNA"/>
</dbReference>
<dbReference type="EMBL" id="AP014957">
    <property type="protein sequence ID" value="BAS70233.1"/>
    <property type="molecule type" value="Genomic_DNA"/>
</dbReference>
<dbReference type="EMBL" id="CM000138">
    <property type="protein sequence ID" value="EEE53814.1"/>
    <property type="molecule type" value="Genomic_DNA"/>
</dbReference>
<dbReference type="EMBL" id="AK068422">
    <property type="protein sequence ID" value="BAG90905.1"/>
    <property type="molecule type" value="mRNA"/>
</dbReference>
<dbReference type="RefSeq" id="XP_015618622.1">
    <property type="nucleotide sequence ID" value="XM_015763136.1"/>
</dbReference>
<dbReference type="SMR" id="Q5ZCL8"/>
<dbReference type="FunCoup" id="Q5ZCL8">
    <property type="interactions" value="287"/>
</dbReference>
<dbReference type="STRING" id="39947.Q5ZCL8"/>
<dbReference type="PaxDb" id="39947-Q5ZCL8"/>
<dbReference type="EnsemblPlants" id="Os01t0132800-01">
    <property type="protein sequence ID" value="Os01t0132800-01"/>
    <property type="gene ID" value="Os01g0132800"/>
</dbReference>
<dbReference type="Gramene" id="Os01t0132800-01">
    <property type="protein sequence ID" value="Os01t0132800-01"/>
    <property type="gene ID" value="Os01g0132800"/>
</dbReference>
<dbReference type="KEGG" id="dosa:Os01g0132800"/>
<dbReference type="eggNOG" id="KOG2255">
    <property type="taxonomic scope" value="Eukaryota"/>
</dbReference>
<dbReference type="HOGENOM" id="CLU_062456_5_0_1"/>
<dbReference type="InParanoid" id="Q5ZCL8"/>
<dbReference type="OMA" id="PNTYMNL"/>
<dbReference type="OrthoDB" id="1711136at2759"/>
<dbReference type="Proteomes" id="UP000000763">
    <property type="component" value="Chromosome 1"/>
</dbReference>
<dbReference type="Proteomes" id="UP000007752">
    <property type="component" value="Chromosome 1"/>
</dbReference>
<dbReference type="Proteomes" id="UP000059680">
    <property type="component" value="Chromosome 1"/>
</dbReference>
<dbReference type="GO" id="GO:0009570">
    <property type="term" value="C:chloroplast stroma"/>
    <property type="evidence" value="ECO:0007669"/>
    <property type="project" value="UniProtKB-SubCell"/>
</dbReference>
<dbReference type="GO" id="GO:1990904">
    <property type="term" value="C:ribonucleoprotein complex"/>
    <property type="evidence" value="ECO:0007669"/>
    <property type="project" value="UniProtKB-KW"/>
</dbReference>
<dbReference type="GO" id="GO:0004045">
    <property type="term" value="F:peptidyl-tRNA hydrolase activity"/>
    <property type="evidence" value="ECO:0000318"/>
    <property type="project" value="GO_Central"/>
</dbReference>
<dbReference type="GO" id="GO:0000049">
    <property type="term" value="F:tRNA binding"/>
    <property type="evidence" value="ECO:0007669"/>
    <property type="project" value="UniProtKB-KW"/>
</dbReference>
<dbReference type="GO" id="GO:0006397">
    <property type="term" value="P:mRNA processing"/>
    <property type="evidence" value="ECO:0007669"/>
    <property type="project" value="UniProtKB-KW"/>
</dbReference>
<dbReference type="GO" id="GO:0008380">
    <property type="term" value="P:RNA splicing"/>
    <property type="evidence" value="ECO:0007669"/>
    <property type="project" value="UniProtKB-KW"/>
</dbReference>
<dbReference type="CDD" id="cd02406">
    <property type="entry name" value="CRS2"/>
    <property type="match status" value="1"/>
</dbReference>
<dbReference type="FunFam" id="3.40.50.1470:FF:000001">
    <property type="entry name" value="Peptidyl-tRNA hydrolase"/>
    <property type="match status" value="1"/>
</dbReference>
<dbReference type="Gene3D" id="3.40.50.1470">
    <property type="entry name" value="Peptidyl-tRNA hydrolase"/>
    <property type="match status" value="1"/>
</dbReference>
<dbReference type="HAMAP" id="MF_00083">
    <property type="entry name" value="Pept_tRNA_hydro_bact"/>
    <property type="match status" value="1"/>
</dbReference>
<dbReference type="InterPro" id="IPR048076">
    <property type="entry name" value="CRS2-like"/>
</dbReference>
<dbReference type="InterPro" id="IPR001328">
    <property type="entry name" value="Pept_tRNA_hydro"/>
</dbReference>
<dbReference type="InterPro" id="IPR018171">
    <property type="entry name" value="Pept_tRNA_hydro_CS"/>
</dbReference>
<dbReference type="InterPro" id="IPR036416">
    <property type="entry name" value="Pept_tRNA_hydro_sf"/>
</dbReference>
<dbReference type="NCBIfam" id="TIGR00447">
    <property type="entry name" value="pth"/>
    <property type="match status" value="1"/>
</dbReference>
<dbReference type="PANTHER" id="PTHR17224:SF3">
    <property type="entry name" value="CHLOROPLASTIC GROUP IIB INTRON SPLICING FACILITATOR CRS2-B, CHLOROPLASTIC"/>
    <property type="match status" value="1"/>
</dbReference>
<dbReference type="PANTHER" id="PTHR17224">
    <property type="entry name" value="PEPTIDYL-TRNA HYDROLASE"/>
    <property type="match status" value="1"/>
</dbReference>
<dbReference type="Pfam" id="PF01195">
    <property type="entry name" value="Pept_tRNA_hydro"/>
    <property type="match status" value="1"/>
</dbReference>
<dbReference type="SUPFAM" id="SSF53178">
    <property type="entry name" value="Peptidyl-tRNA hydrolase-like"/>
    <property type="match status" value="1"/>
</dbReference>
<dbReference type="PROSITE" id="PS01195">
    <property type="entry name" value="PEPT_TRNA_HYDROL_1"/>
    <property type="match status" value="1"/>
</dbReference>
<gene>
    <name type="ordered locus">Os01g0132800</name>
    <name type="ordered locus">LOC_Os01g04130</name>
    <name evidence="6" type="ORF">OsJ_00257</name>
    <name type="ORF">OSJNBa0083M16.12</name>
</gene>
<accession>Q5ZCL8</accession>
<accession>B7EEV8</accession>
<protein>
    <recommendedName>
        <fullName>Chloroplastic group IIB intron splicing facilitator CRS2, chloroplastic</fullName>
    </recommendedName>
    <alternativeName>
        <fullName>CRS2-like protein</fullName>
    </alternativeName>
    <alternativeName>
        <fullName>Chloroplastic RNA splicing factor 2</fullName>
    </alternativeName>
</protein>
<organism>
    <name type="scientific">Oryza sativa subsp. japonica</name>
    <name type="common">Rice</name>
    <dbReference type="NCBI Taxonomy" id="39947"/>
    <lineage>
        <taxon>Eukaryota</taxon>
        <taxon>Viridiplantae</taxon>
        <taxon>Streptophyta</taxon>
        <taxon>Embryophyta</taxon>
        <taxon>Tracheophyta</taxon>
        <taxon>Spermatophyta</taxon>
        <taxon>Magnoliopsida</taxon>
        <taxon>Liliopsida</taxon>
        <taxon>Poales</taxon>
        <taxon>Poaceae</taxon>
        <taxon>BOP clade</taxon>
        <taxon>Oryzoideae</taxon>
        <taxon>Oryzeae</taxon>
        <taxon>Oryzinae</taxon>
        <taxon>Oryza</taxon>
        <taxon>Oryza sativa</taxon>
    </lineage>
</organism>